<evidence type="ECO:0000255" key="1">
    <source>
        <dbReference type="HAMAP-Rule" id="MF_00739"/>
    </source>
</evidence>
<evidence type="ECO:0000269" key="2">
    <source>
    </source>
</evidence>
<evidence type="ECO:0000269" key="3">
    <source>
    </source>
</evidence>
<gene>
    <name evidence="1" type="primary">ureA</name>
    <name type="ordered locus">BSU36660</name>
</gene>
<keyword id="KW-0963">Cytoplasm</keyword>
<keyword id="KW-0378">Hydrolase</keyword>
<keyword id="KW-1185">Reference proteome</keyword>
<organism>
    <name type="scientific">Bacillus subtilis (strain 168)</name>
    <dbReference type="NCBI Taxonomy" id="224308"/>
    <lineage>
        <taxon>Bacteria</taxon>
        <taxon>Bacillati</taxon>
        <taxon>Bacillota</taxon>
        <taxon>Bacilli</taxon>
        <taxon>Bacillales</taxon>
        <taxon>Bacillaceae</taxon>
        <taxon>Bacillus</taxon>
    </lineage>
</organism>
<dbReference type="EC" id="3.5.1.5" evidence="1"/>
<dbReference type="EMBL" id="Z81356">
    <property type="protein sequence ID" value="CAB03687.1"/>
    <property type="molecule type" value="Genomic_DNA"/>
</dbReference>
<dbReference type="EMBL" id="Y08559">
    <property type="protein sequence ID" value="CAA69857.1"/>
    <property type="molecule type" value="Genomic_DNA"/>
</dbReference>
<dbReference type="EMBL" id="AL009126">
    <property type="protein sequence ID" value="CAB15683.1"/>
    <property type="molecule type" value="Genomic_DNA"/>
</dbReference>
<dbReference type="PIR" id="B69729">
    <property type="entry name" value="B69729"/>
</dbReference>
<dbReference type="RefSeq" id="NP_391547.1">
    <property type="nucleotide sequence ID" value="NC_000964.3"/>
</dbReference>
<dbReference type="RefSeq" id="WP_003227724.1">
    <property type="nucleotide sequence ID" value="NZ_OZ025638.1"/>
</dbReference>
<dbReference type="SMR" id="P75030"/>
<dbReference type="FunCoup" id="P75030">
    <property type="interactions" value="92"/>
</dbReference>
<dbReference type="STRING" id="224308.BSU36660"/>
<dbReference type="PaxDb" id="224308-BSU36660"/>
<dbReference type="EnsemblBacteria" id="CAB15683">
    <property type="protein sequence ID" value="CAB15683"/>
    <property type="gene ID" value="BSU_36660"/>
</dbReference>
<dbReference type="GeneID" id="11241269"/>
<dbReference type="GeneID" id="936968"/>
<dbReference type="KEGG" id="bsu:BSU36660"/>
<dbReference type="PATRIC" id="fig|224308.179.peg.3967"/>
<dbReference type="eggNOG" id="COG0831">
    <property type="taxonomic scope" value="Bacteria"/>
</dbReference>
<dbReference type="InParanoid" id="P75030"/>
<dbReference type="OrthoDB" id="9793527at2"/>
<dbReference type="PhylomeDB" id="P75030"/>
<dbReference type="BioCyc" id="BSUB:BSU36660-MONOMER"/>
<dbReference type="UniPathway" id="UPA00258">
    <property type="reaction ID" value="UER00370"/>
</dbReference>
<dbReference type="PRO" id="PR:P75030"/>
<dbReference type="Proteomes" id="UP000001570">
    <property type="component" value="Chromosome"/>
</dbReference>
<dbReference type="GO" id="GO:0005737">
    <property type="term" value="C:cytoplasm"/>
    <property type="evidence" value="ECO:0007669"/>
    <property type="project" value="UniProtKB-SubCell"/>
</dbReference>
<dbReference type="GO" id="GO:0016151">
    <property type="term" value="F:nickel cation binding"/>
    <property type="evidence" value="ECO:0007669"/>
    <property type="project" value="InterPro"/>
</dbReference>
<dbReference type="GO" id="GO:0009039">
    <property type="term" value="F:urease activity"/>
    <property type="evidence" value="ECO:0007669"/>
    <property type="project" value="UniProtKB-UniRule"/>
</dbReference>
<dbReference type="GO" id="GO:0043419">
    <property type="term" value="P:urea catabolic process"/>
    <property type="evidence" value="ECO:0007669"/>
    <property type="project" value="UniProtKB-UniRule"/>
</dbReference>
<dbReference type="CDD" id="cd00390">
    <property type="entry name" value="Urease_gamma"/>
    <property type="match status" value="1"/>
</dbReference>
<dbReference type="Gene3D" id="3.30.280.10">
    <property type="entry name" value="Urease, gamma-like subunit"/>
    <property type="match status" value="1"/>
</dbReference>
<dbReference type="HAMAP" id="MF_00739">
    <property type="entry name" value="Urease_gamma"/>
    <property type="match status" value="1"/>
</dbReference>
<dbReference type="InterPro" id="IPR012010">
    <property type="entry name" value="Urease_gamma"/>
</dbReference>
<dbReference type="InterPro" id="IPR002026">
    <property type="entry name" value="Urease_gamma/gamma-beta_su"/>
</dbReference>
<dbReference type="InterPro" id="IPR036463">
    <property type="entry name" value="Urease_gamma_sf"/>
</dbReference>
<dbReference type="InterPro" id="IPR050069">
    <property type="entry name" value="Urease_subunit"/>
</dbReference>
<dbReference type="NCBIfam" id="NF009712">
    <property type="entry name" value="PRK13241.1"/>
    <property type="match status" value="1"/>
</dbReference>
<dbReference type="NCBIfam" id="TIGR00193">
    <property type="entry name" value="urease_gam"/>
    <property type="match status" value="1"/>
</dbReference>
<dbReference type="PANTHER" id="PTHR33569">
    <property type="entry name" value="UREASE"/>
    <property type="match status" value="1"/>
</dbReference>
<dbReference type="PANTHER" id="PTHR33569:SF1">
    <property type="entry name" value="UREASE"/>
    <property type="match status" value="1"/>
</dbReference>
<dbReference type="Pfam" id="PF00547">
    <property type="entry name" value="Urease_gamma"/>
    <property type="match status" value="1"/>
</dbReference>
<dbReference type="PIRSF" id="PIRSF001223">
    <property type="entry name" value="Urease_gamma"/>
    <property type="match status" value="1"/>
</dbReference>
<dbReference type="SUPFAM" id="SSF54111">
    <property type="entry name" value="Urease, gamma-subunit"/>
    <property type="match status" value="1"/>
</dbReference>
<comment type="catalytic activity">
    <reaction evidence="1 2 3">
        <text>urea + 2 H2O + H(+) = hydrogencarbonate + 2 NH4(+)</text>
        <dbReference type="Rhea" id="RHEA:20557"/>
        <dbReference type="ChEBI" id="CHEBI:15377"/>
        <dbReference type="ChEBI" id="CHEBI:15378"/>
        <dbReference type="ChEBI" id="CHEBI:16199"/>
        <dbReference type="ChEBI" id="CHEBI:17544"/>
        <dbReference type="ChEBI" id="CHEBI:28938"/>
        <dbReference type="EC" id="3.5.1.5"/>
    </reaction>
</comment>
<comment type="pathway">
    <text evidence="1">Nitrogen metabolism; urea degradation; CO(2) and NH(3) from urea (urease route): step 1/1.</text>
</comment>
<comment type="subunit">
    <text evidence="1">Heterotrimer of UreA (gamma), UreB (beta) and UreC (alpha) subunits. Three heterotrimers associate to form the active enzyme.</text>
</comment>
<comment type="subcellular location">
    <subcellularLocation>
        <location evidence="1">Cytoplasm</location>
    </subcellularLocation>
</comment>
<comment type="similarity">
    <text evidence="1">Belongs to the urease gamma subunit family.</text>
</comment>
<sequence length="105" mass="11455">MKLTPVEQEKLLIFAAGELAKQRKARGVLLNYPEAAAYITCFIMEGARDGKGVAELMEAGRHVLTEKDVMEGVPEMLDSIQVEATFPDGVKLVTVHQPISAEVKS</sequence>
<protein>
    <recommendedName>
        <fullName evidence="1">Urease subunit gamma</fullName>
        <ecNumber evidence="1">3.5.1.5</ecNumber>
    </recommendedName>
    <alternativeName>
        <fullName evidence="1">Urea amidohydrolase subunit gamma</fullName>
    </alternativeName>
</protein>
<accession>P75030</accession>
<reference key="1">
    <citation type="journal article" date="1997" name="J. Bacteriol.">
        <title>The Bacillus subtilis ureABC operon.</title>
        <authorList>
            <person name="Cruz-Ramos H."/>
            <person name="Glaser P."/>
            <person name="Wray L.V. Jr."/>
            <person name="Fisher S.H."/>
        </authorList>
    </citation>
    <scope>NUCLEOTIDE SEQUENCE [GENOMIC DNA]</scope>
    <scope>CATALYTIC ACTIVITY</scope>
    <source>
        <strain>168</strain>
    </source>
</reference>
<reference key="2">
    <citation type="journal article" date="1997" name="Nature">
        <title>The complete genome sequence of the Gram-positive bacterium Bacillus subtilis.</title>
        <authorList>
            <person name="Kunst F."/>
            <person name="Ogasawara N."/>
            <person name="Moszer I."/>
            <person name="Albertini A.M."/>
            <person name="Alloni G."/>
            <person name="Azevedo V."/>
            <person name="Bertero M.G."/>
            <person name="Bessieres P."/>
            <person name="Bolotin A."/>
            <person name="Borchert S."/>
            <person name="Borriss R."/>
            <person name="Boursier L."/>
            <person name="Brans A."/>
            <person name="Braun M."/>
            <person name="Brignell S.C."/>
            <person name="Bron S."/>
            <person name="Brouillet S."/>
            <person name="Bruschi C.V."/>
            <person name="Caldwell B."/>
            <person name="Capuano V."/>
            <person name="Carter N.M."/>
            <person name="Choi S.-K."/>
            <person name="Codani J.-J."/>
            <person name="Connerton I.F."/>
            <person name="Cummings N.J."/>
            <person name="Daniel R.A."/>
            <person name="Denizot F."/>
            <person name="Devine K.M."/>
            <person name="Duesterhoeft A."/>
            <person name="Ehrlich S.D."/>
            <person name="Emmerson P.T."/>
            <person name="Entian K.-D."/>
            <person name="Errington J."/>
            <person name="Fabret C."/>
            <person name="Ferrari E."/>
            <person name="Foulger D."/>
            <person name="Fritz C."/>
            <person name="Fujita M."/>
            <person name="Fujita Y."/>
            <person name="Fuma S."/>
            <person name="Galizzi A."/>
            <person name="Galleron N."/>
            <person name="Ghim S.-Y."/>
            <person name="Glaser P."/>
            <person name="Goffeau A."/>
            <person name="Golightly E.J."/>
            <person name="Grandi G."/>
            <person name="Guiseppi G."/>
            <person name="Guy B.J."/>
            <person name="Haga K."/>
            <person name="Haiech J."/>
            <person name="Harwood C.R."/>
            <person name="Henaut A."/>
            <person name="Hilbert H."/>
            <person name="Holsappel S."/>
            <person name="Hosono S."/>
            <person name="Hullo M.-F."/>
            <person name="Itaya M."/>
            <person name="Jones L.-M."/>
            <person name="Joris B."/>
            <person name="Karamata D."/>
            <person name="Kasahara Y."/>
            <person name="Klaerr-Blanchard M."/>
            <person name="Klein C."/>
            <person name="Kobayashi Y."/>
            <person name="Koetter P."/>
            <person name="Koningstein G."/>
            <person name="Krogh S."/>
            <person name="Kumano M."/>
            <person name="Kurita K."/>
            <person name="Lapidus A."/>
            <person name="Lardinois S."/>
            <person name="Lauber J."/>
            <person name="Lazarevic V."/>
            <person name="Lee S.-M."/>
            <person name="Levine A."/>
            <person name="Liu H."/>
            <person name="Masuda S."/>
            <person name="Mauel C."/>
            <person name="Medigue C."/>
            <person name="Medina N."/>
            <person name="Mellado R.P."/>
            <person name="Mizuno M."/>
            <person name="Moestl D."/>
            <person name="Nakai S."/>
            <person name="Noback M."/>
            <person name="Noone D."/>
            <person name="O'Reilly M."/>
            <person name="Ogawa K."/>
            <person name="Ogiwara A."/>
            <person name="Oudega B."/>
            <person name="Park S.-H."/>
            <person name="Parro V."/>
            <person name="Pohl T.M."/>
            <person name="Portetelle D."/>
            <person name="Porwollik S."/>
            <person name="Prescott A.M."/>
            <person name="Presecan E."/>
            <person name="Pujic P."/>
            <person name="Purnelle B."/>
            <person name="Rapoport G."/>
            <person name="Rey M."/>
            <person name="Reynolds S."/>
            <person name="Rieger M."/>
            <person name="Rivolta C."/>
            <person name="Rocha E."/>
            <person name="Roche B."/>
            <person name="Rose M."/>
            <person name="Sadaie Y."/>
            <person name="Sato T."/>
            <person name="Scanlan E."/>
            <person name="Schleich S."/>
            <person name="Schroeter R."/>
            <person name="Scoffone F."/>
            <person name="Sekiguchi J."/>
            <person name="Sekowska A."/>
            <person name="Seror S.J."/>
            <person name="Serror P."/>
            <person name="Shin B.-S."/>
            <person name="Soldo B."/>
            <person name="Sorokin A."/>
            <person name="Tacconi E."/>
            <person name="Takagi T."/>
            <person name="Takahashi H."/>
            <person name="Takemaru K."/>
            <person name="Takeuchi M."/>
            <person name="Tamakoshi A."/>
            <person name="Tanaka T."/>
            <person name="Terpstra P."/>
            <person name="Tognoni A."/>
            <person name="Tosato V."/>
            <person name="Uchiyama S."/>
            <person name="Vandenbol M."/>
            <person name="Vannier F."/>
            <person name="Vassarotti A."/>
            <person name="Viari A."/>
            <person name="Wambutt R."/>
            <person name="Wedler E."/>
            <person name="Wedler H."/>
            <person name="Weitzenegger T."/>
            <person name="Winters P."/>
            <person name="Wipat A."/>
            <person name="Yamamoto H."/>
            <person name="Yamane K."/>
            <person name="Yasumoto K."/>
            <person name="Yata K."/>
            <person name="Yoshida K."/>
            <person name="Yoshikawa H.-F."/>
            <person name="Zumstein E."/>
            <person name="Yoshikawa H."/>
            <person name="Danchin A."/>
        </authorList>
    </citation>
    <scope>NUCLEOTIDE SEQUENCE [LARGE SCALE GENOMIC DNA]</scope>
    <source>
        <strain>168</strain>
    </source>
</reference>
<reference key="3">
    <citation type="journal article" date="2005" name="J. Bacteriol.">
        <title>Biosynthesis of active Bacillus subtilis urease in the absence of known urease accessory proteins.</title>
        <authorList>
            <person name="Kim J.K."/>
            <person name="Mulrooney S.B."/>
            <person name="Hausinger R.P."/>
        </authorList>
    </citation>
    <scope>CATALYTIC ACTIVITY</scope>
</reference>
<proteinExistence type="evidence at protein level"/>
<name>URE3_BACSU</name>
<feature type="chain" id="PRO_0000097993" description="Urease subunit gamma">
    <location>
        <begin position="1"/>
        <end position="105"/>
    </location>
</feature>